<evidence type="ECO:0000255" key="1">
    <source>
        <dbReference type="HAMAP-Rule" id="MF_01208"/>
    </source>
</evidence>
<feature type="chain" id="PRO_0000110677" description="Orotate phosphoribosyltransferase">
    <location>
        <begin position="1"/>
        <end position="224"/>
    </location>
</feature>
<feature type="binding site" description="in other chain" evidence="1">
    <location>
        <position position="29"/>
    </location>
    <ligand>
        <name>5-phospho-alpha-D-ribose 1-diphosphate</name>
        <dbReference type="ChEBI" id="CHEBI:58017"/>
        <note>ligand shared between dimeric partners</note>
    </ligand>
</feature>
<feature type="binding site" evidence="1">
    <location>
        <begin position="37"/>
        <end position="38"/>
    </location>
    <ligand>
        <name>orotate</name>
        <dbReference type="ChEBI" id="CHEBI:30839"/>
    </ligand>
</feature>
<feature type="binding site" description="in other chain" evidence="1">
    <location>
        <begin position="75"/>
        <end position="76"/>
    </location>
    <ligand>
        <name>5-phospho-alpha-D-ribose 1-diphosphate</name>
        <dbReference type="ChEBI" id="CHEBI:58017"/>
        <note>ligand shared between dimeric partners</note>
    </ligand>
</feature>
<feature type="binding site" evidence="1">
    <location>
        <position position="105"/>
    </location>
    <ligand>
        <name>5-phospho-alpha-D-ribose 1-diphosphate</name>
        <dbReference type="ChEBI" id="CHEBI:58017"/>
        <note>ligand shared between dimeric partners</note>
    </ligand>
</feature>
<feature type="binding site" description="in other chain" evidence="1">
    <location>
        <position position="106"/>
    </location>
    <ligand>
        <name>5-phospho-alpha-D-ribose 1-diphosphate</name>
        <dbReference type="ChEBI" id="CHEBI:58017"/>
        <note>ligand shared between dimeric partners</note>
    </ligand>
</feature>
<feature type="binding site" evidence="1">
    <location>
        <position position="109"/>
    </location>
    <ligand>
        <name>5-phospho-alpha-D-ribose 1-diphosphate</name>
        <dbReference type="ChEBI" id="CHEBI:58017"/>
        <note>ligand shared between dimeric partners</note>
    </ligand>
</feature>
<feature type="binding site" evidence="1">
    <location>
        <position position="111"/>
    </location>
    <ligand>
        <name>5-phospho-alpha-D-ribose 1-diphosphate</name>
        <dbReference type="ChEBI" id="CHEBI:58017"/>
        <note>ligand shared between dimeric partners</note>
    </ligand>
</feature>
<feature type="binding site" description="in other chain" evidence="1">
    <location>
        <begin position="130"/>
        <end position="138"/>
    </location>
    <ligand>
        <name>5-phospho-alpha-D-ribose 1-diphosphate</name>
        <dbReference type="ChEBI" id="CHEBI:58017"/>
        <note>ligand shared between dimeric partners</note>
    </ligand>
</feature>
<feature type="binding site" evidence="1">
    <location>
        <position position="134"/>
    </location>
    <ligand>
        <name>orotate</name>
        <dbReference type="ChEBI" id="CHEBI:30839"/>
    </ligand>
</feature>
<feature type="binding site" evidence="1">
    <location>
        <position position="162"/>
    </location>
    <ligand>
        <name>orotate</name>
        <dbReference type="ChEBI" id="CHEBI:30839"/>
    </ligand>
</feature>
<gene>
    <name evidence="1" type="primary">pyrE</name>
    <name type="ordered locus">BP0370</name>
</gene>
<accession>Q7VSN4</accession>
<organism>
    <name type="scientific">Bordetella pertussis (strain Tohama I / ATCC BAA-589 / NCTC 13251)</name>
    <dbReference type="NCBI Taxonomy" id="257313"/>
    <lineage>
        <taxon>Bacteria</taxon>
        <taxon>Pseudomonadati</taxon>
        <taxon>Pseudomonadota</taxon>
        <taxon>Betaproteobacteria</taxon>
        <taxon>Burkholderiales</taxon>
        <taxon>Alcaligenaceae</taxon>
        <taxon>Bordetella</taxon>
    </lineage>
</organism>
<name>PYRE_BORPE</name>
<keyword id="KW-0328">Glycosyltransferase</keyword>
<keyword id="KW-0460">Magnesium</keyword>
<keyword id="KW-0665">Pyrimidine biosynthesis</keyword>
<keyword id="KW-1185">Reference proteome</keyword>
<keyword id="KW-0808">Transferase</keyword>
<protein>
    <recommendedName>
        <fullName evidence="1">Orotate phosphoribosyltransferase</fullName>
        <shortName evidence="1">OPRT</shortName>
        <shortName evidence="1">OPRTase</shortName>
        <ecNumber evidence="1">2.4.2.10</ecNumber>
    </recommendedName>
</protein>
<dbReference type="EC" id="2.4.2.10" evidence="1"/>
<dbReference type="EMBL" id="BX640412">
    <property type="protein sequence ID" value="CAE44702.1"/>
    <property type="molecule type" value="Genomic_DNA"/>
</dbReference>
<dbReference type="RefSeq" id="NP_879242.1">
    <property type="nucleotide sequence ID" value="NC_002929.2"/>
</dbReference>
<dbReference type="RefSeq" id="WP_010929769.1">
    <property type="nucleotide sequence ID" value="NZ_CP039022.1"/>
</dbReference>
<dbReference type="SMR" id="Q7VSN4"/>
<dbReference type="STRING" id="257313.BP0370"/>
<dbReference type="PaxDb" id="257313-BP0370"/>
<dbReference type="GeneID" id="69603377"/>
<dbReference type="KEGG" id="bpe:BP0370"/>
<dbReference type="PATRIC" id="fig|257313.5.peg.400"/>
<dbReference type="eggNOG" id="COG0461">
    <property type="taxonomic scope" value="Bacteria"/>
</dbReference>
<dbReference type="HOGENOM" id="CLU_074878_0_1_4"/>
<dbReference type="UniPathway" id="UPA00070">
    <property type="reaction ID" value="UER00119"/>
</dbReference>
<dbReference type="Proteomes" id="UP000002676">
    <property type="component" value="Chromosome"/>
</dbReference>
<dbReference type="GO" id="GO:0005737">
    <property type="term" value="C:cytoplasm"/>
    <property type="evidence" value="ECO:0007669"/>
    <property type="project" value="TreeGrafter"/>
</dbReference>
<dbReference type="GO" id="GO:0000287">
    <property type="term" value="F:magnesium ion binding"/>
    <property type="evidence" value="ECO:0007669"/>
    <property type="project" value="UniProtKB-UniRule"/>
</dbReference>
<dbReference type="GO" id="GO:0004588">
    <property type="term" value="F:orotate phosphoribosyltransferase activity"/>
    <property type="evidence" value="ECO:0007669"/>
    <property type="project" value="UniProtKB-UniRule"/>
</dbReference>
<dbReference type="GO" id="GO:0006207">
    <property type="term" value="P:'de novo' pyrimidine nucleobase biosynthetic process"/>
    <property type="evidence" value="ECO:0007669"/>
    <property type="project" value="TreeGrafter"/>
</dbReference>
<dbReference type="GO" id="GO:0044205">
    <property type="term" value="P:'de novo' UMP biosynthetic process"/>
    <property type="evidence" value="ECO:0007669"/>
    <property type="project" value="UniProtKB-UniRule"/>
</dbReference>
<dbReference type="GO" id="GO:0046132">
    <property type="term" value="P:pyrimidine ribonucleoside biosynthetic process"/>
    <property type="evidence" value="ECO:0007669"/>
    <property type="project" value="TreeGrafter"/>
</dbReference>
<dbReference type="CDD" id="cd06223">
    <property type="entry name" value="PRTases_typeI"/>
    <property type="match status" value="1"/>
</dbReference>
<dbReference type="FunFam" id="3.40.50.2020:FF:000008">
    <property type="entry name" value="Orotate phosphoribosyltransferase"/>
    <property type="match status" value="1"/>
</dbReference>
<dbReference type="Gene3D" id="3.40.50.2020">
    <property type="match status" value="1"/>
</dbReference>
<dbReference type="HAMAP" id="MF_01208">
    <property type="entry name" value="PyrE"/>
    <property type="match status" value="1"/>
</dbReference>
<dbReference type="InterPro" id="IPR023031">
    <property type="entry name" value="OPRT"/>
</dbReference>
<dbReference type="InterPro" id="IPR004467">
    <property type="entry name" value="Or_phspho_trans_dom"/>
</dbReference>
<dbReference type="InterPro" id="IPR000836">
    <property type="entry name" value="PRibTrfase_dom"/>
</dbReference>
<dbReference type="InterPro" id="IPR029057">
    <property type="entry name" value="PRTase-like"/>
</dbReference>
<dbReference type="NCBIfam" id="TIGR00336">
    <property type="entry name" value="pyrE"/>
    <property type="match status" value="1"/>
</dbReference>
<dbReference type="PANTHER" id="PTHR46683">
    <property type="entry name" value="OROTATE PHOSPHORIBOSYLTRANSFERASE 1-RELATED"/>
    <property type="match status" value="1"/>
</dbReference>
<dbReference type="PANTHER" id="PTHR46683:SF1">
    <property type="entry name" value="OROTATE PHOSPHORIBOSYLTRANSFERASE 1-RELATED"/>
    <property type="match status" value="1"/>
</dbReference>
<dbReference type="Pfam" id="PF00156">
    <property type="entry name" value="Pribosyltran"/>
    <property type="match status" value="1"/>
</dbReference>
<dbReference type="SUPFAM" id="SSF53271">
    <property type="entry name" value="PRTase-like"/>
    <property type="match status" value="1"/>
</dbReference>
<dbReference type="PROSITE" id="PS00103">
    <property type="entry name" value="PUR_PYR_PR_TRANSFER"/>
    <property type="match status" value="1"/>
</dbReference>
<proteinExistence type="inferred from homology"/>
<sequence length="224" mass="23315">MSASASTAADFVRFALDEGVLRFGSFKVKSGRISPYFFNAGLFNSGRSVGTLAGFYAQALIDSGVAFDMLFGPAYKGIPLATATSVALAGHGAMAGRDVPFAFNRKEAKDHGEGGTLVGAPLTGKVVIIDDVITAGTSVRESVEIIRAAGAEPAAVLIALDRMERAGPDDALSPHSAVQDVARTYGIPVVSIASLADIMTLLQDDAQFAEHRAAVQAYRSKYGV</sequence>
<reference key="1">
    <citation type="journal article" date="2003" name="Nat. Genet.">
        <title>Comparative analysis of the genome sequences of Bordetella pertussis, Bordetella parapertussis and Bordetella bronchiseptica.</title>
        <authorList>
            <person name="Parkhill J."/>
            <person name="Sebaihia M."/>
            <person name="Preston A."/>
            <person name="Murphy L.D."/>
            <person name="Thomson N.R."/>
            <person name="Harris D.E."/>
            <person name="Holden M.T.G."/>
            <person name="Churcher C.M."/>
            <person name="Bentley S.D."/>
            <person name="Mungall K.L."/>
            <person name="Cerdeno-Tarraga A.-M."/>
            <person name="Temple L."/>
            <person name="James K.D."/>
            <person name="Harris B."/>
            <person name="Quail M.A."/>
            <person name="Achtman M."/>
            <person name="Atkin R."/>
            <person name="Baker S."/>
            <person name="Basham D."/>
            <person name="Bason N."/>
            <person name="Cherevach I."/>
            <person name="Chillingworth T."/>
            <person name="Collins M."/>
            <person name="Cronin A."/>
            <person name="Davis P."/>
            <person name="Doggett J."/>
            <person name="Feltwell T."/>
            <person name="Goble A."/>
            <person name="Hamlin N."/>
            <person name="Hauser H."/>
            <person name="Holroyd S."/>
            <person name="Jagels K."/>
            <person name="Leather S."/>
            <person name="Moule S."/>
            <person name="Norberczak H."/>
            <person name="O'Neil S."/>
            <person name="Ormond D."/>
            <person name="Price C."/>
            <person name="Rabbinowitsch E."/>
            <person name="Rutter S."/>
            <person name="Sanders M."/>
            <person name="Saunders D."/>
            <person name="Seeger K."/>
            <person name="Sharp S."/>
            <person name="Simmonds M."/>
            <person name="Skelton J."/>
            <person name="Squares R."/>
            <person name="Squares S."/>
            <person name="Stevens K."/>
            <person name="Unwin L."/>
            <person name="Whitehead S."/>
            <person name="Barrell B.G."/>
            <person name="Maskell D.J."/>
        </authorList>
    </citation>
    <scope>NUCLEOTIDE SEQUENCE [LARGE SCALE GENOMIC DNA]</scope>
    <source>
        <strain>Tohama I / ATCC BAA-589 / NCTC 13251</strain>
    </source>
</reference>
<comment type="function">
    <text evidence="1">Catalyzes the transfer of a ribosyl phosphate group from 5-phosphoribose 1-diphosphate to orotate, leading to the formation of orotidine monophosphate (OMP).</text>
</comment>
<comment type="catalytic activity">
    <reaction evidence="1">
        <text>orotidine 5'-phosphate + diphosphate = orotate + 5-phospho-alpha-D-ribose 1-diphosphate</text>
        <dbReference type="Rhea" id="RHEA:10380"/>
        <dbReference type="ChEBI" id="CHEBI:30839"/>
        <dbReference type="ChEBI" id="CHEBI:33019"/>
        <dbReference type="ChEBI" id="CHEBI:57538"/>
        <dbReference type="ChEBI" id="CHEBI:58017"/>
        <dbReference type="EC" id="2.4.2.10"/>
    </reaction>
</comment>
<comment type="cofactor">
    <cofactor evidence="1">
        <name>Mg(2+)</name>
        <dbReference type="ChEBI" id="CHEBI:18420"/>
    </cofactor>
</comment>
<comment type="pathway">
    <text evidence="1">Pyrimidine metabolism; UMP biosynthesis via de novo pathway; UMP from orotate: step 1/2.</text>
</comment>
<comment type="subunit">
    <text evidence="1">Homodimer.</text>
</comment>
<comment type="similarity">
    <text evidence="1">Belongs to the purine/pyrimidine phosphoribosyltransferase family. PyrE subfamily.</text>
</comment>